<evidence type="ECO:0000255" key="1">
    <source>
        <dbReference type="HAMAP-Rule" id="MF_01576"/>
    </source>
</evidence>
<accession>A9WJ10</accession>
<name>FOLD_CHLAA</name>
<proteinExistence type="inferred from homology"/>
<reference key="1">
    <citation type="journal article" date="2011" name="BMC Genomics">
        <title>Complete genome sequence of the filamentous anoxygenic phototrophic bacterium Chloroflexus aurantiacus.</title>
        <authorList>
            <person name="Tang K.H."/>
            <person name="Barry K."/>
            <person name="Chertkov O."/>
            <person name="Dalin E."/>
            <person name="Han C.S."/>
            <person name="Hauser L.J."/>
            <person name="Honchak B.M."/>
            <person name="Karbach L.E."/>
            <person name="Land M.L."/>
            <person name="Lapidus A."/>
            <person name="Larimer F.W."/>
            <person name="Mikhailova N."/>
            <person name="Pitluck S."/>
            <person name="Pierson B.K."/>
            <person name="Blankenship R.E."/>
        </authorList>
    </citation>
    <scope>NUCLEOTIDE SEQUENCE [LARGE SCALE GENOMIC DNA]</scope>
    <source>
        <strain>ATCC 29366 / DSM 635 / J-10-fl</strain>
    </source>
</reference>
<keyword id="KW-0028">Amino-acid biosynthesis</keyword>
<keyword id="KW-0368">Histidine biosynthesis</keyword>
<keyword id="KW-0378">Hydrolase</keyword>
<keyword id="KW-0486">Methionine biosynthesis</keyword>
<keyword id="KW-0511">Multifunctional enzyme</keyword>
<keyword id="KW-0521">NADP</keyword>
<keyword id="KW-0554">One-carbon metabolism</keyword>
<keyword id="KW-0560">Oxidoreductase</keyword>
<keyword id="KW-0658">Purine biosynthesis</keyword>
<keyword id="KW-1185">Reference proteome</keyword>
<protein>
    <recommendedName>
        <fullName evidence="1">Bifunctional protein FolD</fullName>
    </recommendedName>
    <domain>
        <recommendedName>
            <fullName evidence="1">Methylenetetrahydrofolate dehydrogenase</fullName>
            <ecNumber evidence="1">1.5.1.5</ecNumber>
        </recommendedName>
    </domain>
    <domain>
        <recommendedName>
            <fullName evidence="1">Methenyltetrahydrofolate cyclohydrolase</fullName>
            <ecNumber evidence="1">3.5.4.9</ecNumber>
        </recommendedName>
    </domain>
</protein>
<sequence>MSARILDGKALAQELRAEAAAQIAELRTQIDRPPTIAVVQVGDDPAATRYVRSIDRLCQSLGAACRAIALPAETAQADLEATVATLSADDRIDGILLQLPLPAGLTLDGVLSRLAPEKDLDGIHPINAGLLAQGRPTLTPNTPAGGIELMRRYGIDIRGRRAAVVGRSAIVGRPMALLLLQADATVTICHSRTPDLGAVLRECDIIAAAAGRPGLITADMVKPGATVIDFGTNVLADGSMVGDVDFAAVAEVAGAITPVPGGTGPVTNIMLMRNLITATRTRLGI</sequence>
<gene>
    <name evidence="1" type="primary">folD</name>
    <name type="ordered locus">Caur_3281</name>
</gene>
<dbReference type="EC" id="1.5.1.5" evidence="1"/>
<dbReference type="EC" id="3.5.4.9" evidence="1"/>
<dbReference type="EMBL" id="CP000909">
    <property type="protein sequence ID" value="ABY36469.1"/>
    <property type="molecule type" value="Genomic_DNA"/>
</dbReference>
<dbReference type="RefSeq" id="WP_012259122.1">
    <property type="nucleotide sequence ID" value="NC_010175.1"/>
</dbReference>
<dbReference type="RefSeq" id="YP_001636858.1">
    <property type="nucleotide sequence ID" value="NC_010175.1"/>
</dbReference>
<dbReference type="SMR" id="A9WJ10"/>
<dbReference type="FunCoup" id="A9WJ10">
    <property type="interactions" value="397"/>
</dbReference>
<dbReference type="STRING" id="324602.Caur_3281"/>
<dbReference type="EnsemblBacteria" id="ABY36469">
    <property type="protein sequence ID" value="ABY36469"/>
    <property type="gene ID" value="Caur_3281"/>
</dbReference>
<dbReference type="KEGG" id="cau:Caur_3281"/>
<dbReference type="PATRIC" id="fig|324602.8.peg.3701"/>
<dbReference type="eggNOG" id="COG0190">
    <property type="taxonomic scope" value="Bacteria"/>
</dbReference>
<dbReference type="HOGENOM" id="CLU_034045_2_1_0"/>
<dbReference type="InParanoid" id="A9WJ10"/>
<dbReference type="UniPathway" id="UPA00193"/>
<dbReference type="Proteomes" id="UP000002008">
    <property type="component" value="Chromosome"/>
</dbReference>
<dbReference type="GO" id="GO:0005829">
    <property type="term" value="C:cytosol"/>
    <property type="evidence" value="ECO:0000318"/>
    <property type="project" value="GO_Central"/>
</dbReference>
<dbReference type="GO" id="GO:0004477">
    <property type="term" value="F:methenyltetrahydrofolate cyclohydrolase activity"/>
    <property type="evidence" value="ECO:0000318"/>
    <property type="project" value="GO_Central"/>
</dbReference>
<dbReference type="GO" id="GO:0004488">
    <property type="term" value="F:methylenetetrahydrofolate dehydrogenase (NADP+) activity"/>
    <property type="evidence" value="ECO:0000318"/>
    <property type="project" value="GO_Central"/>
</dbReference>
<dbReference type="GO" id="GO:0000105">
    <property type="term" value="P:L-histidine biosynthetic process"/>
    <property type="evidence" value="ECO:0007669"/>
    <property type="project" value="UniProtKB-KW"/>
</dbReference>
<dbReference type="GO" id="GO:0009086">
    <property type="term" value="P:methionine biosynthetic process"/>
    <property type="evidence" value="ECO:0007669"/>
    <property type="project" value="UniProtKB-KW"/>
</dbReference>
<dbReference type="GO" id="GO:0006164">
    <property type="term" value="P:purine nucleotide biosynthetic process"/>
    <property type="evidence" value="ECO:0007669"/>
    <property type="project" value="UniProtKB-KW"/>
</dbReference>
<dbReference type="GO" id="GO:0035999">
    <property type="term" value="P:tetrahydrofolate interconversion"/>
    <property type="evidence" value="ECO:0000318"/>
    <property type="project" value="GO_Central"/>
</dbReference>
<dbReference type="CDD" id="cd01080">
    <property type="entry name" value="NAD_bind_m-THF_DH_Cyclohyd"/>
    <property type="match status" value="1"/>
</dbReference>
<dbReference type="FunFam" id="3.40.50.720:FF:000189">
    <property type="entry name" value="Bifunctional protein FolD"/>
    <property type="match status" value="1"/>
</dbReference>
<dbReference type="FunFam" id="3.40.50.10860:FF:000005">
    <property type="entry name" value="C-1-tetrahydrofolate synthase, cytoplasmic, putative"/>
    <property type="match status" value="1"/>
</dbReference>
<dbReference type="Gene3D" id="3.40.50.10860">
    <property type="entry name" value="Leucine Dehydrogenase, chain A, domain 1"/>
    <property type="match status" value="1"/>
</dbReference>
<dbReference type="Gene3D" id="3.40.50.720">
    <property type="entry name" value="NAD(P)-binding Rossmann-like Domain"/>
    <property type="match status" value="1"/>
</dbReference>
<dbReference type="HAMAP" id="MF_01576">
    <property type="entry name" value="THF_DHG_CYH"/>
    <property type="match status" value="1"/>
</dbReference>
<dbReference type="InterPro" id="IPR046346">
    <property type="entry name" value="Aminoacid_DH-like_N_sf"/>
</dbReference>
<dbReference type="InterPro" id="IPR036291">
    <property type="entry name" value="NAD(P)-bd_dom_sf"/>
</dbReference>
<dbReference type="InterPro" id="IPR000672">
    <property type="entry name" value="THF_DH/CycHdrlase"/>
</dbReference>
<dbReference type="InterPro" id="IPR020630">
    <property type="entry name" value="THF_DH/CycHdrlase_cat_dom"/>
</dbReference>
<dbReference type="InterPro" id="IPR020631">
    <property type="entry name" value="THF_DH/CycHdrlase_NAD-bd_dom"/>
</dbReference>
<dbReference type="PANTHER" id="PTHR48099:SF5">
    <property type="entry name" value="C-1-TETRAHYDROFOLATE SYNTHASE, CYTOPLASMIC"/>
    <property type="match status" value="1"/>
</dbReference>
<dbReference type="PANTHER" id="PTHR48099">
    <property type="entry name" value="C-1-TETRAHYDROFOLATE SYNTHASE, CYTOPLASMIC-RELATED"/>
    <property type="match status" value="1"/>
</dbReference>
<dbReference type="Pfam" id="PF00763">
    <property type="entry name" value="THF_DHG_CYH"/>
    <property type="match status" value="1"/>
</dbReference>
<dbReference type="Pfam" id="PF02882">
    <property type="entry name" value="THF_DHG_CYH_C"/>
    <property type="match status" value="1"/>
</dbReference>
<dbReference type="PRINTS" id="PR00085">
    <property type="entry name" value="THFDHDRGNASE"/>
</dbReference>
<dbReference type="SUPFAM" id="SSF53223">
    <property type="entry name" value="Aminoacid dehydrogenase-like, N-terminal domain"/>
    <property type="match status" value="1"/>
</dbReference>
<dbReference type="SUPFAM" id="SSF51735">
    <property type="entry name" value="NAD(P)-binding Rossmann-fold domains"/>
    <property type="match status" value="1"/>
</dbReference>
<organism>
    <name type="scientific">Chloroflexus aurantiacus (strain ATCC 29366 / DSM 635 / J-10-fl)</name>
    <dbReference type="NCBI Taxonomy" id="324602"/>
    <lineage>
        <taxon>Bacteria</taxon>
        <taxon>Bacillati</taxon>
        <taxon>Chloroflexota</taxon>
        <taxon>Chloroflexia</taxon>
        <taxon>Chloroflexales</taxon>
        <taxon>Chloroflexineae</taxon>
        <taxon>Chloroflexaceae</taxon>
        <taxon>Chloroflexus</taxon>
    </lineage>
</organism>
<feature type="chain" id="PRO_1000087892" description="Bifunctional protein FolD">
    <location>
        <begin position="1"/>
        <end position="285"/>
    </location>
</feature>
<feature type="binding site" evidence="1">
    <location>
        <begin position="166"/>
        <end position="168"/>
    </location>
    <ligand>
        <name>NADP(+)</name>
        <dbReference type="ChEBI" id="CHEBI:58349"/>
    </ligand>
</feature>
<feature type="binding site" evidence="1">
    <location>
        <position position="191"/>
    </location>
    <ligand>
        <name>NADP(+)</name>
        <dbReference type="ChEBI" id="CHEBI:58349"/>
    </ligand>
</feature>
<feature type="binding site" evidence="1">
    <location>
        <position position="232"/>
    </location>
    <ligand>
        <name>NADP(+)</name>
        <dbReference type="ChEBI" id="CHEBI:58349"/>
    </ligand>
</feature>
<comment type="function">
    <text evidence="1">Catalyzes the oxidation of 5,10-methylenetetrahydrofolate to 5,10-methenyltetrahydrofolate and then the hydrolysis of 5,10-methenyltetrahydrofolate to 10-formyltetrahydrofolate.</text>
</comment>
<comment type="catalytic activity">
    <reaction evidence="1">
        <text>(6R)-5,10-methylene-5,6,7,8-tetrahydrofolate + NADP(+) = (6R)-5,10-methenyltetrahydrofolate + NADPH</text>
        <dbReference type="Rhea" id="RHEA:22812"/>
        <dbReference type="ChEBI" id="CHEBI:15636"/>
        <dbReference type="ChEBI" id="CHEBI:57455"/>
        <dbReference type="ChEBI" id="CHEBI:57783"/>
        <dbReference type="ChEBI" id="CHEBI:58349"/>
        <dbReference type="EC" id="1.5.1.5"/>
    </reaction>
</comment>
<comment type="catalytic activity">
    <reaction evidence="1">
        <text>(6R)-5,10-methenyltetrahydrofolate + H2O = (6R)-10-formyltetrahydrofolate + H(+)</text>
        <dbReference type="Rhea" id="RHEA:23700"/>
        <dbReference type="ChEBI" id="CHEBI:15377"/>
        <dbReference type="ChEBI" id="CHEBI:15378"/>
        <dbReference type="ChEBI" id="CHEBI:57455"/>
        <dbReference type="ChEBI" id="CHEBI:195366"/>
        <dbReference type="EC" id="3.5.4.9"/>
    </reaction>
</comment>
<comment type="pathway">
    <text evidence="1">One-carbon metabolism; tetrahydrofolate interconversion.</text>
</comment>
<comment type="subunit">
    <text evidence="1">Homodimer.</text>
</comment>
<comment type="similarity">
    <text evidence="1">Belongs to the tetrahydrofolate dehydrogenase/cyclohydrolase family.</text>
</comment>